<sequence length="416" mass="46103">SVGFKAGVKEYKLTYYTPEYETKDTDILAAFRVTPQPGVPPEEAGAAVAAESSTGTWTTVWTDGLTSLDRYKGRCYHIEPVPGEEDQYIAYVAYPLDLFEEGSVTNMFTSIVGNVFGFKALRALRLEDLRIPVAYVKTFQGPPHGIQVERDKLNKYGRPLLGCTIKPKLGLSAKNYGRAVYECLRGGLDFTKDDENVNSQPFMRWRDRFLFCTEALFKAQVETGEIKGHYLNATAGTCEEMMKRAVFARELGVPIIMHDYLTGGFTANTTLAHYCRDNGLLLHIHRAMHAVIDRQKNHGMHFRVLAKGLRMSGGDHIHAGTVVGKLEGERDITLGFVDLLRDDFIEKDRSRGIYFTQDWVSLPGVIPVASGGIHVXHMPALTEIFGDDSVLQXGGGTLXXPWGNAPXAVANRVALX</sequence>
<dbReference type="EC" id="4.1.1.39"/>
<dbReference type="EMBL" id="L14007">
    <property type="protein sequence ID" value="AAA84614.1"/>
    <property type="molecule type" value="Genomic_DNA"/>
</dbReference>
<dbReference type="GO" id="GO:0009507">
    <property type="term" value="C:chloroplast"/>
    <property type="evidence" value="ECO:0007669"/>
    <property type="project" value="UniProtKB-SubCell"/>
</dbReference>
<dbReference type="GO" id="GO:0000287">
    <property type="term" value="F:magnesium ion binding"/>
    <property type="evidence" value="ECO:0007669"/>
    <property type="project" value="InterPro"/>
</dbReference>
<dbReference type="GO" id="GO:0004497">
    <property type="term" value="F:monooxygenase activity"/>
    <property type="evidence" value="ECO:0007669"/>
    <property type="project" value="UniProtKB-KW"/>
</dbReference>
<dbReference type="GO" id="GO:0016984">
    <property type="term" value="F:ribulose-bisphosphate carboxylase activity"/>
    <property type="evidence" value="ECO:0007669"/>
    <property type="project" value="UniProtKB-EC"/>
</dbReference>
<dbReference type="GO" id="GO:0009853">
    <property type="term" value="P:photorespiration"/>
    <property type="evidence" value="ECO:0007669"/>
    <property type="project" value="UniProtKB-KW"/>
</dbReference>
<dbReference type="GO" id="GO:0019253">
    <property type="term" value="P:reductive pentose-phosphate cycle"/>
    <property type="evidence" value="ECO:0007669"/>
    <property type="project" value="UniProtKB-KW"/>
</dbReference>
<dbReference type="FunFam" id="3.20.20.110:FF:000003">
    <property type="entry name" value="Ribulose bisphosphate carboxylase large chain"/>
    <property type="match status" value="1"/>
</dbReference>
<dbReference type="FunFam" id="3.30.70.150:FF:000001">
    <property type="entry name" value="Ribulose bisphosphate carboxylase large chain"/>
    <property type="match status" value="1"/>
</dbReference>
<dbReference type="Gene3D" id="3.20.20.110">
    <property type="entry name" value="Ribulose bisphosphate carboxylase, large subunit, C-terminal domain"/>
    <property type="match status" value="1"/>
</dbReference>
<dbReference type="Gene3D" id="3.30.70.150">
    <property type="entry name" value="RuBisCO large subunit, N-terminal domain"/>
    <property type="match status" value="1"/>
</dbReference>
<dbReference type="InterPro" id="IPR033966">
    <property type="entry name" value="RuBisCO"/>
</dbReference>
<dbReference type="InterPro" id="IPR020878">
    <property type="entry name" value="RuBisCo_large_chain_AS"/>
</dbReference>
<dbReference type="InterPro" id="IPR000685">
    <property type="entry name" value="RuBisCO_lsu_C"/>
</dbReference>
<dbReference type="InterPro" id="IPR036376">
    <property type="entry name" value="RuBisCO_lsu_C_sf"/>
</dbReference>
<dbReference type="InterPro" id="IPR017443">
    <property type="entry name" value="RuBisCO_lsu_fd_N"/>
</dbReference>
<dbReference type="InterPro" id="IPR036422">
    <property type="entry name" value="RuBisCO_lsu_N_sf"/>
</dbReference>
<dbReference type="NCBIfam" id="NF003252">
    <property type="entry name" value="PRK04208.1"/>
    <property type="match status" value="1"/>
</dbReference>
<dbReference type="PANTHER" id="PTHR42704">
    <property type="entry name" value="RIBULOSE BISPHOSPHATE CARBOXYLASE"/>
    <property type="match status" value="1"/>
</dbReference>
<dbReference type="PANTHER" id="PTHR42704:SF15">
    <property type="entry name" value="RIBULOSE BISPHOSPHATE CARBOXYLASE LARGE CHAIN"/>
    <property type="match status" value="1"/>
</dbReference>
<dbReference type="Pfam" id="PF00016">
    <property type="entry name" value="RuBisCO_large"/>
    <property type="match status" value="1"/>
</dbReference>
<dbReference type="Pfam" id="PF02788">
    <property type="entry name" value="RuBisCO_large_N"/>
    <property type="match status" value="1"/>
</dbReference>
<dbReference type="SFLD" id="SFLDG01052">
    <property type="entry name" value="RuBisCO"/>
    <property type="match status" value="1"/>
</dbReference>
<dbReference type="SFLD" id="SFLDS00014">
    <property type="entry name" value="RuBisCO"/>
    <property type="match status" value="1"/>
</dbReference>
<dbReference type="SFLD" id="SFLDG00301">
    <property type="entry name" value="RuBisCO-like_proteins"/>
    <property type="match status" value="1"/>
</dbReference>
<dbReference type="SUPFAM" id="SSF51649">
    <property type="entry name" value="RuBisCo, C-terminal domain"/>
    <property type="match status" value="1"/>
</dbReference>
<dbReference type="SUPFAM" id="SSF54966">
    <property type="entry name" value="RuBisCO, large subunit, small (N-terminal) domain"/>
    <property type="match status" value="1"/>
</dbReference>
<dbReference type="PROSITE" id="PS00157">
    <property type="entry name" value="RUBISCO_LARGE"/>
    <property type="match status" value="1"/>
</dbReference>
<proteinExistence type="inferred from homology"/>
<gene>
    <name type="primary">rbcL</name>
</gene>
<geneLocation type="chloroplast"/>
<evidence type="ECO:0000250" key="1"/>
<evidence type="ECO:0000255" key="2">
    <source>
        <dbReference type="PROSITE-ProRule" id="PRU10114"/>
    </source>
</evidence>
<evidence type="ECO:0000305" key="3"/>
<keyword id="KW-0113">Calvin cycle</keyword>
<keyword id="KW-0120">Carbon dioxide fixation</keyword>
<keyword id="KW-0150">Chloroplast</keyword>
<keyword id="KW-1015">Disulfide bond</keyword>
<keyword id="KW-0456">Lyase</keyword>
<keyword id="KW-0460">Magnesium</keyword>
<keyword id="KW-0479">Metal-binding</keyword>
<keyword id="KW-0488">Methylation</keyword>
<keyword id="KW-0503">Monooxygenase</keyword>
<keyword id="KW-0560">Oxidoreductase</keyword>
<keyword id="KW-0601">Photorespiration</keyword>
<keyword id="KW-0602">Photosynthesis</keyword>
<keyword id="KW-0934">Plastid</keyword>
<organism>
    <name type="scientific">Spigelia marilandica</name>
    <name type="common">Woodland pinkroot</name>
    <name type="synonym">Lonicera marilandica</name>
    <dbReference type="NCBI Taxonomy" id="28544"/>
    <lineage>
        <taxon>Eukaryota</taxon>
        <taxon>Viridiplantae</taxon>
        <taxon>Streptophyta</taxon>
        <taxon>Embryophyta</taxon>
        <taxon>Tracheophyta</taxon>
        <taxon>Spermatophyta</taxon>
        <taxon>Magnoliopsida</taxon>
        <taxon>eudicotyledons</taxon>
        <taxon>Gunneridae</taxon>
        <taxon>Pentapetalae</taxon>
        <taxon>asterids</taxon>
        <taxon>lamiids</taxon>
        <taxon>Gentianales</taxon>
        <taxon>Loganiaceae</taxon>
        <taxon>Spigelia</taxon>
    </lineage>
</organism>
<name>RBL_SPIMR</name>
<protein>
    <recommendedName>
        <fullName>Ribulose bisphosphate carboxylase large chain</fullName>
        <shortName>RuBisCO large subunit</shortName>
        <ecNumber>4.1.1.39</ecNumber>
    </recommendedName>
</protein>
<reference key="1">
    <citation type="journal article" date="1993" name="Ann. Mo. Bot. Gard.">
        <title>A parsimony analysis of the Asteridae sensu lato based on rbcL sequences.</title>
        <authorList>
            <person name="Olmstead R.G."/>
            <person name="Bremer B."/>
            <person name="Scott K.M."/>
            <person name="Palmer J.D."/>
        </authorList>
        <dbReference type="AGRICOLA" id="IND93053816"/>
    </citation>
    <scope>NUCLEOTIDE SEQUENCE [GENOMIC DNA]</scope>
</reference>
<feature type="chain" id="PRO_0000062597" description="Ribulose bisphosphate carboxylase large chain">
    <location>
        <begin position="1" status="less than"/>
        <end position="416" status="greater than"/>
    </location>
</feature>
<feature type="active site" description="Proton acceptor" evidence="1">
    <location>
        <position position="166"/>
    </location>
</feature>
<feature type="active site" description="Proton acceptor" evidence="1">
    <location>
        <position position="285"/>
    </location>
</feature>
<feature type="binding site" description="in homodimeric partner" evidence="1">
    <location>
        <position position="114"/>
    </location>
    <ligand>
        <name>substrate</name>
    </ligand>
</feature>
<feature type="binding site" evidence="1">
    <location>
        <position position="164"/>
    </location>
    <ligand>
        <name>substrate</name>
    </ligand>
</feature>
<feature type="binding site" evidence="1">
    <location>
        <position position="168"/>
    </location>
    <ligand>
        <name>substrate</name>
    </ligand>
</feature>
<feature type="binding site" description="via carbamate group" evidence="2">
    <location>
        <position position="192"/>
    </location>
    <ligand>
        <name>Mg(2+)</name>
        <dbReference type="ChEBI" id="CHEBI:18420"/>
    </ligand>
</feature>
<feature type="binding site" evidence="2">
    <location>
        <position position="194"/>
    </location>
    <ligand>
        <name>Mg(2+)</name>
        <dbReference type="ChEBI" id="CHEBI:18420"/>
    </ligand>
</feature>
<feature type="binding site" evidence="2">
    <location>
        <position position="195"/>
    </location>
    <ligand>
        <name>Mg(2+)</name>
        <dbReference type="ChEBI" id="CHEBI:18420"/>
    </ligand>
</feature>
<feature type="binding site" evidence="1">
    <location>
        <position position="286"/>
    </location>
    <ligand>
        <name>substrate</name>
    </ligand>
</feature>
<feature type="binding site" evidence="1">
    <location>
        <position position="318"/>
    </location>
    <ligand>
        <name>substrate</name>
    </ligand>
</feature>
<feature type="binding site" evidence="1">
    <location>
        <position position="370"/>
    </location>
    <ligand>
        <name>substrate</name>
    </ligand>
</feature>
<feature type="site" description="Transition state stabilizer" evidence="1">
    <location>
        <position position="325"/>
    </location>
</feature>
<feature type="modified residue" description="N6,N6,N6-trimethyllysine" evidence="1">
    <location>
        <position position="5"/>
    </location>
</feature>
<feature type="modified residue" description="N6-carboxylysine" evidence="2">
    <location>
        <position position="192"/>
    </location>
</feature>
<feature type="disulfide bond" description="Interchain; in linked form" evidence="1">
    <location>
        <position position="238"/>
    </location>
</feature>
<feature type="non-terminal residue">
    <location>
        <position position="1"/>
    </location>
</feature>
<feature type="non-terminal residue">
    <location>
        <position position="416"/>
    </location>
</feature>
<accession>P36488</accession>
<comment type="function">
    <text evidence="1">RuBisCO catalyzes two reactions: the carboxylation of D-ribulose 1,5-bisphosphate, the primary event in carbon dioxide fixation, as well as the oxidative fragmentation of the pentose substrate in the photorespiration process. Both reactions occur simultaneously and in competition at the same active site (By similarity).</text>
</comment>
<comment type="catalytic activity">
    <reaction>
        <text>2 (2R)-3-phosphoglycerate + 2 H(+) = D-ribulose 1,5-bisphosphate + CO2 + H2O</text>
        <dbReference type="Rhea" id="RHEA:23124"/>
        <dbReference type="ChEBI" id="CHEBI:15377"/>
        <dbReference type="ChEBI" id="CHEBI:15378"/>
        <dbReference type="ChEBI" id="CHEBI:16526"/>
        <dbReference type="ChEBI" id="CHEBI:57870"/>
        <dbReference type="ChEBI" id="CHEBI:58272"/>
        <dbReference type="EC" id="4.1.1.39"/>
    </reaction>
</comment>
<comment type="catalytic activity">
    <reaction>
        <text>D-ribulose 1,5-bisphosphate + O2 = 2-phosphoglycolate + (2R)-3-phosphoglycerate + 2 H(+)</text>
        <dbReference type="Rhea" id="RHEA:36631"/>
        <dbReference type="ChEBI" id="CHEBI:15378"/>
        <dbReference type="ChEBI" id="CHEBI:15379"/>
        <dbReference type="ChEBI" id="CHEBI:57870"/>
        <dbReference type="ChEBI" id="CHEBI:58033"/>
        <dbReference type="ChEBI" id="CHEBI:58272"/>
    </reaction>
</comment>
<comment type="cofactor">
    <cofactor evidence="1">
        <name>Mg(2+)</name>
        <dbReference type="ChEBI" id="CHEBI:18420"/>
    </cofactor>
    <text evidence="1">Binds 1 Mg(2+) ion per subunit.</text>
</comment>
<comment type="subunit">
    <text evidence="1">Heterohexadecamer of 8 large chains and 8 small chains; disulfide-linked. The disulfide link is formed within the large subunit homodimers (By similarity).</text>
</comment>
<comment type="subcellular location">
    <subcellularLocation>
        <location>Plastid</location>
        <location>Chloroplast</location>
    </subcellularLocation>
</comment>
<comment type="PTM">
    <text evidence="1">The disulfide bond which can form in the large chain dimeric partners within the hexadecamer appears to be associated with oxidative stress and protein turnover.</text>
</comment>
<comment type="miscellaneous">
    <text evidence="1">The basic functional RuBisCO is composed of a large chain homodimer in a 'head-to-tail' conformation. In form I RuBisCO this homodimer is arranged in a barrel-like tetramer with the small subunits forming a tetrameric 'cap' on each end of the 'barrel' (By similarity).</text>
</comment>
<comment type="similarity">
    <text evidence="3">Belongs to the RuBisCO large chain family. Type I subfamily.</text>
</comment>